<accession>B4U2K0</accession>
<reference key="1">
    <citation type="journal article" date="2008" name="PLoS ONE">
        <title>Genome sequence of a lancefield group C Streptococcus zooepidemicus strain causing epidemic nephritis: new information about an old disease.</title>
        <authorList>
            <person name="Beres S.B."/>
            <person name="Sesso R."/>
            <person name="Pinto S.W.L."/>
            <person name="Hoe N.P."/>
            <person name="Porcella S.F."/>
            <person name="Deleo F.R."/>
            <person name="Musser J.M."/>
        </authorList>
    </citation>
    <scope>NUCLEOTIDE SEQUENCE [LARGE SCALE GENOMIC DNA]</scope>
    <source>
        <strain>MGCS10565</strain>
    </source>
</reference>
<proteinExistence type="inferred from homology"/>
<protein>
    <recommendedName>
        <fullName evidence="1">Large ribosomal subunit protein bL35</fullName>
    </recommendedName>
    <alternativeName>
        <fullName evidence="3">50S ribosomal protein L35</fullName>
    </alternativeName>
</protein>
<gene>
    <name evidence="1" type="primary">rpmI</name>
    <name type="ordered locus">Sez_0858</name>
</gene>
<evidence type="ECO:0000255" key="1">
    <source>
        <dbReference type="HAMAP-Rule" id="MF_00514"/>
    </source>
</evidence>
<evidence type="ECO:0000256" key="2">
    <source>
        <dbReference type="SAM" id="MobiDB-lite"/>
    </source>
</evidence>
<evidence type="ECO:0000305" key="3"/>
<feature type="chain" id="PRO_1000127410" description="Large ribosomal subunit protein bL35">
    <location>
        <begin position="1"/>
        <end position="65"/>
    </location>
</feature>
<feature type="region of interest" description="Disordered" evidence="2">
    <location>
        <begin position="1"/>
        <end position="20"/>
    </location>
</feature>
<feature type="compositionally biased region" description="Basic residues" evidence="2">
    <location>
        <begin position="1"/>
        <end position="16"/>
    </location>
</feature>
<keyword id="KW-0687">Ribonucleoprotein</keyword>
<keyword id="KW-0689">Ribosomal protein</keyword>
<organism>
    <name type="scientific">Streptococcus equi subsp. zooepidemicus (strain MGCS10565)</name>
    <dbReference type="NCBI Taxonomy" id="552526"/>
    <lineage>
        <taxon>Bacteria</taxon>
        <taxon>Bacillati</taxon>
        <taxon>Bacillota</taxon>
        <taxon>Bacilli</taxon>
        <taxon>Lactobacillales</taxon>
        <taxon>Streptococcaceae</taxon>
        <taxon>Streptococcus</taxon>
    </lineage>
</organism>
<sequence>MPKQKTHRASAKRFKRTGSGGLKRFRAFTSHRFHGKTKKQRRHLRKAGMVHAGDFKRIKAMVTGL</sequence>
<comment type="similarity">
    <text evidence="1">Belongs to the bacterial ribosomal protein bL35 family.</text>
</comment>
<dbReference type="EMBL" id="CP001129">
    <property type="protein sequence ID" value="ACG62217.1"/>
    <property type="molecule type" value="Genomic_DNA"/>
</dbReference>
<dbReference type="RefSeq" id="WP_012515490.1">
    <property type="nucleotide sequence ID" value="NC_011134.1"/>
</dbReference>
<dbReference type="SMR" id="B4U2K0"/>
<dbReference type="GeneID" id="83704734"/>
<dbReference type="KEGG" id="sez:Sez_0858"/>
<dbReference type="HOGENOM" id="CLU_169643_3_1_9"/>
<dbReference type="Proteomes" id="UP000001873">
    <property type="component" value="Chromosome"/>
</dbReference>
<dbReference type="GO" id="GO:0022625">
    <property type="term" value="C:cytosolic large ribosomal subunit"/>
    <property type="evidence" value="ECO:0007669"/>
    <property type="project" value="TreeGrafter"/>
</dbReference>
<dbReference type="GO" id="GO:0003735">
    <property type="term" value="F:structural constituent of ribosome"/>
    <property type="evidence" value="ECO:0007669"/>
    <property type="project" value="InterPro"/>
</dbReference>
<dbReference type="GO" id="GO:0006412">
    <property type="term" value="P:translation"/>
    <property type="evidence" value="ECO:0007669"/>
    <property type="project" value="UniProtKB-UniRule"/>
</dbReference>
<dbReference type="FunFam" id="4.10.410.60:FF:000001">
    <property type="entry name" value="50S ribosomal protein L35"/>
    <property type="match status" value="1"/>
</dbReference>
<dbReference type="Gene3D" id="4.10.410.60">
    <property type="match status" value="1"/>
</dbReference>
<dbReference type="HAMAP" id="MF_00514">
    <property type="entry name" value="Ribosomal_bL35"/>
    <property type="match status" value="1"/>
</dbReference>
<dbReference type="InterPro" id="IPR001706">
    <property type="entry name" value="Ribosomal_bL35"/>
</dbReference>
<dbReference type="InterPro" id="IPR021137">
    <property type="entry name" value="Ribosomal_bL35-like"/>
</dbReference>
<dbReference type="InterPro" id="IPR018265">
    <property type="entry name" value="Ribosomal_bL35_CS"/>
</dbReference>
<dbReference type="InterPro" id="IPR037229">
    <property type="entry name" value="Ribosomal_bL35_sf"/>
</dbReference>
<dbReference type="NCBIfam" id="TIGR00001">
    <property type="entry name" value="rpmI_bact"/>
    <property type="match status" value="1"/>
</dbReference>
<dbReference type="PANTHER" id="PTHR33343">
    <property type="entry name" value="54S RIBOSOMAL PROTEIN BL35M"/>
    <property type="match status" value="1"/>
</dbReference>
<dbReference type="PANTHER" id="PTHR33343:SF1">
    <property type="entry name" value="LARGE RIBOSOMAL SUBUNIT PROTEIN BL35M"/>
    <property type="match status" value="1"/>
</dbReference>
<dbReference type="Pfam" id="PF01632">
    <property type="entry name" value="Ribosomal_L35p"/>
    <property type="match status" value="1"/>
</dbReference>
<dbReference type="PRINTS" id="PR00064">
    <property type="entry name" value="RIBOSOMALL35"/>
</dbReference>
<dbReference type="SUPFAM" id="SSF143034">
    <property type="entry name" value="L35p-like"/>
    <property type="match status" value="1"/>
</dbReference>
<dbReference type="PROSITE" id="PS00936">
    <property type="entry name" value="RIBOSOMAL_L35"/>
    <property type="match status" value="1"/>
</dbReference>
<name>RL35_STREM</name>